<protein>
    <recommendedName>
        <fullName evidence="1">Small ribosomal subunit protein uS4</fullName>
    </recommendedName>
    <alternativeName>
        <fullName evidence="2">30S ribosomal protein S4</fullName>
    </alternativeName>
</protein>
<accession>P59134</accession>
<name>RS4_THEVB</name>
<dbReference type="EMBL" id="BA000039">
    <property type="protein sequence ID" value="BAC07700.1"/>
    <property type="molecule type" value="Genomic_DNA"/>
</dbReference>
<dbReference type="RefSeq" id="NP_680938.1">
    <property type="nucleotide sequence ID" value="NC_004113.1"/>
</dbReference>
<dbReference type="RefSeq" id="WP_011056002.1">
    <property type="nucleotide sequence ID" value="NC_004113.1"/>
</dbReference>
<dbReference type="SMR" id="P59134"/>
<dbReference type="STRING" id="197221.gene:10746727"/>
<dbReference type="EnsemblBacteria" id="BAC07700">
    <property type="protein sequence ID" value="BAC07700"/>
    <property type="gene ID" value="BAC07700"/>
</dbReference>
<dbReference type="KEGG" id="tel:tlr0147"/>
<dbReference type="PATRIC" id="fig|197221.4.peg.153"/>
<dbReference type="eggNOG" id="COG0522">
    <property type="taxonomic scope" value="Bacteria"/>
</dbReference>
<dbReference type="Proteomes" id="UP000000440">
    <property type="component" value="Chromosome"/>
</dbReference>
<dbReference type="GO" id="GO:0015935">
    <property type="term" value="C:small ribosomal subunit"/>
    <property type="evidence" value="ECO:0007669"/>
    <property type="project" value="InterPro"/>
</dbReference>
<dbReference type="GO" id="GO:0019843">
    <property type="term" value="F:rRNA binding"/>
    <property type="evidence" value="ECO:0007669"/>
    <property type="project" value="UniProtKB-UniRule"/>
</dbReference>
<dbReference type="GO" id="GO:0003735">
    <property type="term" value="F:structural constituent of ribosome"/>
    <property type="evidence" value="ECO:0007669"/>
    <property type="project" value="InterPro"/>
</dbReference>
<dbReference type="GO" id="GO:0042274">
    <property type="term" value="P:ribosomal small subunit biogenesis"/>
    <property type="evidence" value="ECO:0007669"/>
    <property type="project" value="TreeGrafter"/>
</dbReference>
<dbReference type="GO" id="GO:0006412">
    <property type="term" value="P:translation"/>
    <property type="evidence" value="ECO:0007669"/>
    <property type="project" value="UniProtKB-UniRule"/>
</dbReference>
<dbReference type="CDD" id="cd00165">
    <property type="entry name" value="S4"/>
    <property type="match status" value="1"/>
</dbReference>
<dbReference type="FunFam" id="3.10.290.10:FF:000001">
    <property type="entry name" value="30S ribosomal protein S4"/>
    <property type="match status" value="1"/>
</dbReference>
<dbReference type="FunFam" id="1.10.1050.10:FF:000002">
    <property type="entry name" value="30S ribosomal protein S4, chloroplastic"/>
    <property type="match status" value="1"/>
</dbReference>
<dbReference type="Gene3D" id="1.10.1050.10">
    <property type="entry name" value="Ribosomal Protein S4 Delta 41, Chain A, domain 1"/>
    <property type="match status" value="1"/>
</dbReference>
<dbReference type="Gene3D" id="3.10.290.10">
    <property type="entry name" value="RNA-binding S4 domain"/>
    <property type="match status" value="1"/>
</dbReference>
<dbReference type="HAMAP" id="MF_01306_B">
    <property type="entry name" value="Ribosomal_uS4_B"/>
    <property type="match status" value="1"/>
</dbReference>
<dbReference type="InterPro" id="IPR022801">
    <property type="entry name" value="Ribosomal_uS4"/>
</dbReference>
<dbReference type="InterPro" id="IPR005709">
    <property type="entry name" value="Ribosomal_uS4_bac-type"/>
</dbReference>
<dbReference type="InterPro" id="IPR018079">
    <property type="entry name" value="Ribosomal_uS4_CS"/>
</dbReference>
<dbReference type="InterPro" id="IPR001912">
    <property type="entry name" value="Ribosomal_uS4_N"/>
</dbReference>
<dbReference type="InterPro" id="IPR002942">
    <property type="entry name" value="S4_RNA-bd"/>
</dbReference>
<dbReference type="InterPro" id="IPR036986">
    <property type="entry name" value="S4_RNA-bd_sf"/>
</dbReference>
<dbReference type="NCBIfam" id="NF003717">
    <property type="entry name" value="PRK05327.1"/>
    <property type="match status" value="1"/>
</dbReference>
<dbReference type="NCBIfam" id="TIGR01017">
    <property type="entry name" value="rpsD_bact"/>
    <property type="match status" value="1"/>
</dbReference>
<dbReference type="PANTHER" id="PTHR11831">
    <property type="entry name" value="30S 40S RIBOSOMAL PROTEIN"/>
    <property type="match status" value="1"/>
</dbReference>
<dbReference type="PANTHER" id="PTHR11831:SF4">
    <property type="entry name" value="SMALL RIBOSOMAL SUBUNIT PROTEIN US4M"/>
    <property type="match status" value="1"/>
</dbReference>
<dbReference type="Pfam" id="PF00163">
    <property type="entry name" value="Ribosomal_S4"/>
    <property type="match status" value="1"/>
</dbReference>
<dbReference type="Pfam" id="PF01479">
    <property type="entry name" value="S4"/>
    <property type="match status" value="1"/>
</dbReference>
<dbReference type="SMART" id="SM01390">
    <property type="entry name" value="Ribosomal_S4"/>
    <property type="match status" value="1"/>
</dbReference>
<dbReference type="SMART" id="SM00363">
    <property type="entry name" value="S4"/>
    <property type="match status" value="1"/>
</dbReference>
<dbReference type="SUPFAM" id="SSF55174">
    <property type="entry name" value="Alpha-L RNA-binding motif"/>
    <property type="match status" value="1"/>
</dbReference>
<dbReference type="PROSITE" id="PS00632">
    <property type="entry name" value="RIBOSOMAL_S4"/>
    <property type="match status" value="1"/>
</dbReference>
<dbReference type="PROSITE" id="PS50889">
    <property type="entry name" value="S4"/>
    <property type="match status" value="1"/>
</dbReference>
<gene>
    <name evidence="1" type="primary">rpsD</name>
    <name evidence="1" type="synonym">rps4</name>
    <name type="ordered locus">tlr0147</name>
</gene>
<reference key="1">
    <citation type="journal article" date="2002" name="DNA Res.">
        <title>Complete genome structure of the thermophilic cyanobacterium Thermosynechococcus elongatus BP-1.</title>
        <authorList>
            <person name="Nakamura Y."/>
            <person name="Kaneko T."/>
            <person name="Sato S."/>
            <person name="Ikeuchi M."/>
            <person name="Katoh H."/>
            <person name="Sasamoto S."/>
            <person name="Watanabe A."/>
            <person name="Iriguchi M."/>
            <person name="Kawashima K."/>
            <person name="Kimura T."/>
            <person name="Kishida Y."/>
            <person name="Kiyokawa C."/>
            <person name="Kohara M."/>
            <person name="Matsumoto M."/>
            <person name="Matsuno A."/>
            <person name="Nakazaki N."/>
            <person name="Shimpo S."/>
            <person name="Sugimoto M."/>
            <person name="Takeuchi C."/>
            <person name="Yamada M."/>
            <person name="Tabata S."/>
        </authorList>
    </citation>
    <scope>NUCLEOTIDE SEQUENCE [LARGE SCALE GENOMIC DNA]</scope>
    <source>
        <strain>NIES-2133 / IAM M-273 / BP-1</strain>
    </source>
</reference>
<keyword id="KW-1185">Reference proteome</keyword>
<keyword id="KW-0687">Ribonucleoprotein</keyword>
<keyword id="KW-0689">Ribosomal protein</keyword>
<keyword id="KW-0694">RNA-binding</keyword>
<keyword id="KW-0699">rRNA-binding</keyword>
<feature type="chain" id="PRO_0000132477" description="Small ribosomal subunit protein uS4">
    <location>
        <begin position="1"/>
        <end position="202"/>
    </location>
</feature>
<feature type="domain" description="S4 RNA-binding" evidence="1">
    <location>
        <begin position="90"/>
        <end position="152"/>
    </location>
</feature>
<sequence>MARYRGPRLRIVRRLGELAGLTRKVPKRSYPPGQHGQARKKRSEYALRLEEKQKLRFNYGVSERQLVRYVRKARRVSGSTGQTLLQLLEMRLDNTVFRLGMAPTIPAARQLVNHGHILVNGRNVSIPSYQCRPGDVITVRDNERSRRLVETNLQNPGLANLPSHLELDKSTLTGRVTGIVERQWVALEVNELLVVEYYSRKV</sequence>
<comment type="function">
    <text evidence="1">One of the primary rRNA binding proteins, it binds directly to 16S rRNA where it nucleates assembly of the body of the 30S subunit.</text>
</comment>
<comment type="function">
    <text evidence="1">With S5 and S12 plays an important role in translational accuracy.</text>
</comment>
<comment type="subunit">
    <text evidence="1">Part of the 30S ribosomal subunit. Contacts protein S5. The interaction surface between S4 and S5 is involved in control of translational fidelity.</text>
</comment>
<comment type="similarity">
    <text evidence="1">Belongs to the universal ribosomal protein uS4 family.</text>
</comment>
<evidence type="ECO:0000255" key="1">
    <source>
        <dbReference type="HAMAP-Rule" id="MF_01306"/>
    </source>
</evidence>
<evidence type="ECO:0000305" key="2"/>
<proteinExistence type="inferred from homology"/>
<organism>
    <name type="scientific">Thermosynechococcus vestitus (strain NIES-2133 / IAM M-273 / BP-1)</name>
    <dbReference type="NCBI Taxonomy" id="197221"/>
    <lineage>
        <taxon>Bacteria</taxon>
        <taxon>Bacillati</taxon>
        <taxon>Cyanobacteriota</taxon>
        <taxon>Cyanophyceae</taxon>
        <taxon>Acaryochloridales</taxon>
        <taxon>Thermosynechococcaceae</taxon>
        <taxon>Thermosynechococcus</taxon>
    </lineage>
</organism>